<sequence length="422" mass="47137">MTVFFKTLRNHWKKTTAGLCLLTWGGHWLYGKHCDNLLRRAACQEAQVFGNQLIPPNAQVKKATVFLNPAACKGKARTLFEKNAAPILHLSGMDVTIVKTDYEGQAKKLLELMENTDVIIVAGGDGTLQEVVTGVLRRTDEATFSKIPIGFIPLGETSSLSHTLFAESGNKVQHITDATLAIVKGETVPLDVLQIKGEKEQPVFAMTGLRWGSFRDAGVKVSKYWYLGPLKIKAAHFFSTLKEWPQTHQASISYTGPTERPPNEPEETPVQRPSLYRRILRRLASYWAQPQDALSQEVSPEVWKDVQLSTIELSITTRNNQLDPTSKEDFLNICIEPDTISKGDFITIGSRKVRNPKLHVEGTECLQASQCTLLIPEGAGGSFSIDSEEYEAMPVEVKLLPRKLQFFCDPRKREQMLTSPTQ</sequence>
<keyword id="KW-0002">3D-structure</keyword>
<keyword id="KW-0007">Acetylation</keyword>
<keyword id="KW-0025">Alternative splicing</keyword>
<keyword id="KW-0067">ATP-binding</keyword>
<keyword id="KW-0122">Cardiomyopathy</keyword>
<keyword id="KW-0898">Cataract</keyword>
<keyword id="KW-0225">Disease variant</keyword>
<keyword id="KW-0418">Kinase</keyword>
<keyword id="KW-0443">Lipid metabolism</keyword>
<keyword id="KW-0472">Membrane</keyword>
<keyword id="KW-0496">Mitochondrion</keyword>
<keyword id="KW-0999">Mitochondrion inner membrane</keyword>
<keyword id="KW-0547">Nucleotide-binding</keyword>
<keyword id="KW-1274">Primary mitochondrial disease</keyword>
<keyword id="KW-1267">Proteomics identification</keyword>
<keyword id="KW-1185">Reference proteome</keyword>
<keyword id="KW-0808">Transferase</keyword>
<comment type="function">
    <text evidence="1 4 11 12">Lipid kinase that can phosphorylate both monoacylglycerol and diacylglycerol to form lysophosphatidic acid (LPA) and phosphatidic acid (PA), respectively (PubMed:15939762). Does not phosphorylate sphingosine (PubMed:15939762). Phosphorylates ceramide (By similarity). Phosphorylates 1,2-dioleoylglycerol more rapidly than 2,3-dioleoylglycerol (By similarity). Independently of its lipid kinase activity, acts as a component of the TIM22 complex (PubMed:28712724, PubMed:28712726). The TIM22 complex mediates the import and insertion of multi-pass transmembrane proteins into the mitochondrial inner membrane by forming a twin-pore translocase that uses the membrane potential as the external driving force (PubMed:28712724, PubMed:28712726). In the TIM22 complex, required for the import of a subset of metabolite carriers into mitochondria, such as ANT1/SLC25A4 and SLC25A24, while it is not required for the import of TIMM23 (PubMed:28712724). Overexpression increases the formation and secretion of LPA, resulting in transactivation of EGFR and activation of the downstream MAPK signaling pathway, leading to increased cell growth (PubMed:15939762).</text>
</comment>
<comment type="catalytic activity">
    <reaction evidence="4">
        <text>a monoacylglycerol + ATP = a monoacyl-sn-glycero-3-phosphate + ADP + H(+)</text>
        <dbReference type="Rhea" id="RHEA:19293"/>
        <dbReference type="ChEBI" id="CHEBI:15378"/>
        <dbReference type="ChEBI" id="CHEBI:17408"/>
        <dbReference type="ChEBI" id="CHEBI:30616"/>
        <dbReference type="ChEBI" id="CHEBI:77589"/>
        <dbReference type="ChEBI" id="CHEBI:456216"/>
        <dbReference type="EC" id="2.7.1.94"/>
    </reaction>
    <physiologicalReaction direction="left-to-right" evidence="18">
        <dbReference type="Rhea" id="RHEA:19294"/>
    </physiologicalReaction>
</comment>
<comment type="catalytic activity">
    <reaction evidence="4">
        <text>a 1,2-diacyl-sn-glycerol + ATP = a 1,2-diacyl-sn-glycero-3-phosphate + ADP + H(+)</text>
        <dbReference type="Rhea" id="RHEA:10272"/>
        <dbReference type="ChEBI" id="CHEBI:15378"/>
        <dbReference type="ChEBI" id="CHEBI:17815"/>
        <dbReference type="ChEBI" id="CHEBI:30616"/>
        <dbReference type="ChEBI" id="CHEBI:58608"/>
        <dbReference type="ChEBI" id="CHEBI:456216"/>
        <dbReference type="EC" id="2.7.1.107"/>
    </reaction>
    <physiologicalReaction direction="left-to-right" evidence="18">
        <dbReference type="Rhea" id="RHEA:10273"/>
    </physiologicalReaction>
</comment>
<comment type="catalytic activity">
    <reaction evidence="1">
        <text>an N-acylsphing-4-enine + ATP = an N-acylsphing-4-enine 1-phosphate + ADP + H(+)</text>
        <dbReference type="Rhea" id="RHEA:17929"/>
        <dbReference type="ChEBI" id="CHEBI:15378"/>
        <dbReference type="ChEBI" id="CHEBI:30616"/>
        <dbReference type="ChEBI" id="CHEBI:52639"/>
        <dbReference type="ChEBI" id="CHEBI:57674"/>
        <dbReference type="ChEBI" id="CHEBI:456216"/>
        <dbReference type="EC" id="2.7.1.138"/>
    </reaction>
    <physiologicalReaction direction="left-to-right" evidence="1">
        <dbReference type="Rhea" id="RHEA:17930"/>
    </physiologicalReaction>
</comment>
<comment type="catalytic activity">
    <reaction evidence="4">
        <text>1-(9Z-octadecenoyl)-sn-glycerol + ATP = 1-(9Z-octadecenoyl)-sn-glycero-3-phosphate + ADP + H(+)</text>
        <dbReference type="Rhea" id="RHEA:41079"/>
        <dbReference type="ChEBI" id="CHEBI:15378"/>
        <dbReference type="ChEBI" id="CHEBI:30616"/>
        <dbReference type="ChEBI" id="CHEBI:74544"/>
        <dbReference type="ChEBI" id="CHEBI:75757"/>
        <dbReference type="ChEBI" id="CHEBI:456216"/>
    </reaction>
    <physiologicalReaction direction="left-to-right" evidence="18">
        <dbReference type="Rhea" id="RHEA:41080"/>
    </physiologicalReaction>
</comment>
<comment type="catalytic activity">
    <reaction evidence="4">
        <text>1,2-di-(9Z-octadecenoyl)-sn-glycerol + ATP = 1,2-di-(9Z-octadecenoyl)-sn-glycero-3-phosphate + ADP + H(+)</text>
        <dbReference type="Rhea" id="RHEA:40327"/>
        <dbReference type="ChEBI" id="CHEBI:15378"/>
        <dbReference type="ChEBI" id="CHEBI:30616"/>
        <dbReference type="ChEBI" id="CHEBI:52333"/>
        <dbReference type="ChEBI" id="CHEBI:74546"/>
        <dbReference type="ChEBI" id="CHEBI:456216"/>
    </reaction>
    <physiologicalReaction direction="left-to-right" evidence="18">
        <dbReference type="Rhea" id="RHEA:40328"/>
    </physiologicalReaction>
</comment>
<comment type="catalytic activity">
    <reaction evidence="4">
        <text>a 1-acyl-sn-glycerol + ATP = a 1-acyl-sn-glycero-3-phosphate + ADP + H(+)</text>
        <dbReference type="Rhea" id="RHEA:33747"/>
        <dbReference type="ChEBI" id="CHEBI:15378"/>
        <dbReference type="ChEBI" id="CHEBI:30616"/>
        <dbReference type="ChEBI" id="CHEBI:57970"/>
        <dbReference type="ChEBI" id="CHEBI:64683"/>
        <dbReference type="ChEBI" id="CHEBI:456216"/>
    </reaction>
    <physiologicalReaction direction="left-to-right" evidence="18">
        <dbReference type="Rhea" id="RHEA:33748"/>
    </physiologicalReaction>
</comment>
<comment type="catalytic activity">
    <reaction evidence="4">
        <text>1-hexadecanoyl-sn-glycerol + ATP = 1-hexadecanoyl-sn-glycero-3-phosphate + ADP + H(+)</text>
        <dbReference type="Rhea" id="RHEA:43308"/>
        <dbReference type="ChEBI" id="CHEBI:15378"/>
        <dbReference type="ChEBI" id="CHEBI:30616"/>
        <dbReference type="ChEBI" id="CHEBI:57518"/>
        <dbReference type="ChEBI" id="CHEBI:75542"/>
        <dbReference type="ChEBI" id="CHEBI:456216"/>
    </reaction>
    <physiologicalReaction direction="left-to-right" evidence="18">
        <dbReference type="Rhea" id="RHEA:43309"/>
    </physiologicalReaction>
</comment>
<comment type="catalytic activity">
    <reaction evidence="4">
        <text>a 2-acylglycerol + ATP = a 2-acyl-sn-glycerol 3-phosphate + ADP + H(+)</text>
        <dbReference type="Rhea" id="RHEA:39847"/>
        <dbReference type="ChEBI" id="CHEBI:15378"/>
        <dbReference type="ChEBI" id="CHEBI:17389"/>
        <dbReference type="ChEBI" id="CHEBI:30616"/>
        <dbReference type="ChEBI" id="CHEBI:64982"/>
        <dbReference type="ChEBI" id="CHEBI:456216"/>
    </reaction>
    <physiologicalReaction direction="left-to-right" evidence="18">
        <dbReference type="Rhea" id="RHEA:39848"/>
    </physiologicalReaction>
</comment>
<comment type="catalytic activity">
    <reaction evidence="4">
        <text>2-(5Z,8Z,11Z,14Z-eicosatetraenoyl)-glycerol + ATP = 2-(5Z,8Z,11Z,14Z-eicosatetraenoyl)-sn-glycero-3-phosphate + ADP + H(+)</text>
        <dbReference type="Rhea" id="RHEA:43316"/>
        <dbReference type="ChEBI" id="CHEBI:15378"/>
        <dbReference type="ChEBI" id="CHEBI:30616"/>
        <dbReference type="ChEBI" id="CHEBI:52392"/>
        <dbReference type="ChEBI" id="CHEBI:78209"/>
        <dbReference type="ChEBI" id="CHEBI:456216"/>
    </reaction>
    <physiologicalReaction direction="left-to-right" evidence="18">
        <dbReference type="Rhea" id="RHEA:43317"/>
    </physiologicalReaction>
</comment>
<comment type="catalytic activity">
    <reaction evidence="1">
        <text>1-(5Z,8Z,11Z,14Z-eicosatetraenoyl)-sn-glycerol + ATP = 1-(5Z,8Z,11Z,14Z-eicosatetraenoyl)-sn-glycero-3-phosphate + ADP + H(+)</text>
        <dbReference type="Rhea" id="RHEA:43328"/>
        <dbReference type="ChEBI" id="CHEBI:15378"/>
        <dbReference type="ChEBI" id="CHEBI:30616"/>
        <dbReference type="ChEBI" id="CHEBI:34071"/>
        <dbReference type="ChEBI" id="CHEBI:74938"/>
        <dbReference type="ChEBI" id="CHEBI:456216"/>
    </reaction>
    <physiologicalReaction direction="left-to-right" evidence="1">
        <dbReference type="Rhea" id="RHEA:43329"/>
    </physiologicalReaction>
</comment>
<comment type="catalytic activity">
    <reaction evidence="4">
        <text>N-(hexanoyl)sphing-4-enine + ATP = N-hexanoylsphing-4-enine 1-phosphate + ADP + H(+)</text>
        <dbReference type="Rhea" id="RHEA:43312"/>
        <dbReference type="ChEBI" id="CHEBI:15378"/>
        <dbReference type="ChEBI" id="CHEBI:30616"/>
        <dbReference type="ChEBI" id="CHEBI:63867"/>
        <dbReference type="ChEBI" id="CHEBI:82959"/>
        <dbReference type="ChEBI" id="CHEBI:456216"/>
    </reaction>
    <physiologicalReaction direction="left-to-right" evidence="18">
        <dbReference type="Rhea" id="RHEA:43313"/>
    </physiologicalReaction>
</comment>
<comment type="cofactor">
    <cofactor evidence="4">
        <name>Mg(2+)</name>
        <dbReference type="ChEBI" id="CHEBI:18420"/>
    </cofactor>
</comment>
<comment type="pathway">
    <text evidence="4">Lipid metabolism; glycerolipid metabolism.</text>
</comment>
<comment type="subunit">
    <text evidence="11 12 13">Component of the TIM22 complex, which core is composed of TIMM22, associated with TIMM10 (TIMM10A and/or TIMM10B), TIMM9, AGK and TIMM29 (PubMed:28712724, PubMed:28712726). Interacts with SMIM26 (PubMed:37009826).</text>
</comment>
<comment type="interaction">
    <interactant intactId="EBI-2269837">
        <id>Q53H12</id>
    </interactant>
    <interactant intactId="EBI-10763431">
        <id>P53701</id>
        <label>HCCS</label>
    </interactant>
    <organismsDiffer>false</organismsDiffer>
    <experiments>4</experiments>
</comment>
<comment type="interaction">
    <interactant intactId="EBI-2269837">
        <id>Q53H12</id>
    </interactant>
    <interactant intactId="EBI-466029">
        <id>P42858</id>
        <label>HTT</label>
    </interactant>
    <organismsDiffer>false</organismsDiffer>
    <experiments>3</experiments>
</comment>
<comment type="interaction">
    <interactant intactId="EBI-2269837">
        <id>Q53H12</id>
    </interactant>
    <interactant intactId="EBI-50428917">
        <id>A0A096LP01</id>
        <label>SMIM26</label>
    </interactant>
    <organismsDiffer>false</organismsDiffer>
    <experiments>18</experiments>
</comment>
<comment type="interaction">
    <interactant intactId="EBI-25944242">
        <id>Q53H12-2</id>
    </interactant>
    <interactant intactId="EBI-466029">
        <id>P42858</id>
        <label>HTT</label>
    </interactant>
    <organismsDiffer>false</organismsDiffer>
    <experiments>12</experiments>
</comment>
<comment type="subcellular location">
    <subcellularLocation>
        <location evidence="4 5 11 12">Mitochondrion inner membrane</location>
        <topology evidence="11">Peripheral membrane protein</topology>
    </subcellularLocation>
    <subcellularLocation>
        <location evidence="11 12">Mitochondrion intermembrane space</location>
    </subcellularLocation>
    <text evidence="11 12">Localizes in the mitochondrion intermembrane space, where it associates with the inner membrane (PubMed:28712724). It is unclear whether the N-terminal hydrophobic region forms a transmembrane region or associates with the membrane without crossing it (PubMed:28712724, PubMed:28712726).</text>
</comment>
<comment type="alternative products">
    <event type="alternative splicing"/>
    <isoform>
        <id>Q53H12-1</id>
        <name>1</name>
        <sequence type="displayed"/>
    </isoform>
    <isoform>
        <id>Q53H12-2</id>
        <name>2</name>
        <sequence type="described" ref="VSP_020925 VSP_020926"/>
    </isoform>
</comment>
<comment type="tissue specificity">
    <text evidence="4">Highly expressed in muscle, heart, kidney and brain.</text>
</comment>
<comment type="induction">
    <text evidence="4">Overexpressed in prostate cancer, suggesting that it may play a role in initiation and progression of prostate cancer, processes in which lysophosphatidic acid (LPA) plays key roles.</text>
</comment>
<comment type="disease" evidence="6 7 9 10 12">
    <disease id="DI-03390">
        <name>Mitochondrial DNA depletion syndrome 10</name>
        <acronym>MTDPS10</acronym>
        <description>An autosomal recessive mitochondrial disorder characterized by congenital cataracts, hypertrophic cardiomyopathy, skeletal myopathy, exercise intolerance, and lactic acidosis. Mental development is normal, but affected individuals may die early from cardiomyopathy.</description>
        <dbReference type="MIM" id="212350"/>
    </disease>
    <text evidence="12">The disease is caused by variants affecting the gene represented in this entry. The TIM22 complex and import of proteins into mitochondrion are affected in patients suffering of MTDPS10 (PubMed:28712726).</text>
</comment>
<comment type="disease" evidence="8">
    <disease id="DI-03473">
        <name>Cataract 38</name>
        <acronym>CTRCT38</acronym>
        <description>An opacification of the crystalline lens of the eye becoming evident at birth. It frequently results in visual impairment or blindness. Opacities vary in morphology, are often confined to a portion of the lens, and may be static or progressive. In general, the more posteriorly located and dense an opacity, the greater the impact on visual function.</description>
        <dbReference type="MIM" id="614691"/>
    </disease>
    <text>The disease is caused by variants affecting the gene represented in this entry.</text>
</comment>
<comment type="similarity">
    <text evidence="17">Belongs to the AGK family.</text>
</comment>
<comment type="caution">
    <text evidence="11 12">According to a report, the N-terminal hydrophobic region forms a transmembrane region that crosses the mitochondrion inner membrane (PubMed:28712726). According to another report, the N-terminal hydrophobic region associates with the membrane without crossing it (PubMed:28712724).</text>
</comment>
<gene>
    <name evidence="15 19" type="primary">AGK</name>
    <name evidence="16" type="synonym">MULK</name>
</gene>
<proteinExistence type="evidence at protein level"/>
<reference key="1">
    <citation type="journal article" date="2006" name="J. Lipid Res.">
        <title>Further characterization of mammalian ceramide kinase: substrate delivery and (stereo)specificity, tissue distribution, and subcellular localization studies.</title>
        <authorList>
            <person name="Van Overloop H."/>
            <person name="Gijsbers S."/>
            <person name="Van Veldhoven P.P."/>
        </authorList>
    </citation>
    <scope>NUCLEOTIDE SEQUENCE [MRNA] (ISOFORM 1)</scope>
    <scope>SUBCELLULAR LOCATION</scope>
</reference>
<reference key="2">
    <citation type="journal article" date="2004" name="Nat. Genet.">
        <title>Complete sequencing and characterization of 21,243 full-length human cDNAs.</title>
        <authorList>
            <person name="Ota T."/>
            <person name="Suzuki Y."/>
            <person name="Nishikawa T."/>
            <person name="Otsuki T."/>
            <person name="Sugiyama T."/>
            <person name="Irie R."/>
            <person name="Wakamatsu A."/>
            <person name="Hayashi K."/>
            <person name="Sato H."/>
            <person name="Nagai K."/>
            <person name="Kimura K."/>
            <person name="Makita H."/>
            <person name="Sekine M."/>
            <person name="Obayashi M."/>
            <person name="Nishi T."/>
            <person name="Shibahara T."/>
            <person name="Tanaka T."/>
            <person name="Ishii S."/>
            <person name="Yamamoto J."/>
            <person name="Saito K."/>
            <person name="Kawai Y."/>
            <person name="Isono Y."/>
            <person name="Nakamura Y."/>
            <person name="Nagahari K."/>
            <person name="Murakami K."/>
            <person name="Yasuda T."/>
            <person name="Iwayanagi T."/>
            <person name="Wagatsuma M."/>
            <person name="Shiratori A."/>
            <person name="Sudo H."/>
            <person name="Hosoiri T."/>
            <person name="Kaku Y."/>
            <person name="Kodaira H."/>
            <person name="Kondo H."/>
            <person name="Sugawara M."/>
            <person name="Takahashi M."/>
            <person name="Kanda K."/>
            <person name="Yokoi T."/>
            <person name="Furuya T."/>
            <person name="Kikkawa E."/>
            <person name="Omura Y."/>
            <person name="Abe K."/>
            <person name="Kamihara K."/>
            <person name="Katsuta N."/>
            <person name="Sato K."/>
            <person name="Tanikawa M."/>
            <person name="Yamazaki M."/>
            <person name="Ninomiya K."/>
            <person name="Ishibashi T."/>
            <person name="Yamashita H."/>
            <person name="Murakawa K."/>
            <person name="Fujimori K."/>
            <person name="Tanai H."/>
            <person name="Kimata M."/>
            <person name="Watanabe M."/>
            <person name="Hiraoka S."/>
            <person name="Chiba Y."/>
            <person name="Ishida S."/>
            <person name="Ono Y."/>
            <person name="Takiguchi S."/>
            <person name="Watanabe S."/>
            <person name="Yosida M."/>
            <person name="Hotuta T."/>
            <person name="Kusano J."/>
            <person name="Kanehori K."/>
            <person name="Takahashi-Fujii A."/>
            <person name="Hara H."/>
            <person name="Tanase T.-O."/>
            <person name="Nomura Y."/>
            <person name="Togiya S."/>
            <person name="Komai F."/>
            <person name="Hara R."/>
            <person name="Takeuchi K."/>
            <person name="Arita M."/>
            <person name="Imose N."/>
            <person name="Musashino K."/>
            <person name="Yuuki H."/>
            <person name="Oshima A."/>
            <person name="Sasaki N."/>
            <person name="Aotsuka S."/>
            <person name="Yoshikawa Y."/>
            <person name="Matsunawa H."/>
            <person name="Ichihara T."/>
            <person name="Shiohata N."/>
            <person name="Sano S."/>
            <person name="Moriya S."/>
            <person name="Momiyama H."/>
            <person name="Satoh N."/>
            <person name="Takami S."/>
            <person name="Terashima Y."/>
            <person name="Suzuki O."/>
            <person name="Nakagawa S."/>
            <person name="Senoh A."/>
            <person name="Mizoguchi H."/>
            <person name="Goto Y."/>
            <person name="Shimizu F."/>
            <person name="Wakebe H."/>
            <person name="Hishigaki H."/>
            <person name="Watanabe T."/>
            <person name="Sugiyama A."/>
            <person name="Takemoto M."/>
            <person name="Kawakami B."/>
            <person name="Yamazaki M."/>
            <person name="Watanabe K."/>
            <person name="Kumagai A."/>
            <person name="Itakura S."/>
            <person name="Fukuzumi Y."/>
            <person name="Fujimori Y."/>
            <person name="Komiyama M."/>
            <person name="Tashiro H."/>
            <person name="Tanigami A."/>
            <person name="Fujiwara T."/>
            <person name="Ono T."/>
            <person name="Yamada K."/>
            <person name="Fujii Y."/>
            <person name="Ozaki K."/>
            <person name="Hirao M."/>
            <person name="Ohmori Y."/>
            <person name="Kawabata A."/>
            <person name="Hikiji T."/>
            <person name="Kobatake N."/>
            <person name="Inagaki H."/>
            <person name="Ikema Y."/>
            <person name="Okamoto S."/>
            <person name="Okitani R."/>
            <person name="Kawakami T."/>
            <person name="Noguchi S."/>
            <person name="Itoh T."/>
            <person name="Shigeta K."/>
            <person name="Senba T."/>
            <person name="Matsumura K."/>
            <person name="Nakajima Y."/>
            <person name="Mizuno T."/>
            <person name="Morinaga M."/>
            <person name="Sasaki M."/>
            <person name="Togashi T."/>
            <person name="Oyama M."/>
            <person name="Hata H."/>
            <person name="Watanabe M."/>
            <person name="Komatsu T."/>
            <person name="Mizushima-Sugano J."/>
            <person name="Satoh T."/>
            <person name="Shirai Y."/>
            <person name="Takahashi Y."/>
            <person name="Nakagawa K."/>
            <person name="Okumura K."/>
            <person name="Nagase T."/>
            <person name="Nomura N."/>
            <person name="Kikuchi H."/>
            <person name="Masuho Y."/>
            <person name="Yamashita R."/>
            <person name="Nakai K."/>
            <person name="Yada T."/>
            <person name="Nakamura Y."/>
            <person name="Ohara O."/>
            <person name="Isogai T."/>
            <person name="Sugano S."/>
        </authorList>
    </citation>
    <scope>NUCLEOTIDE SEQUENCE [LARGE SCALE MRNA] (ISOFORM 1)</scope>
</reference>
<reference key="3">
    <citation type="submission" date="2005-04" db="EMBL/GenBank/DDBJ databases">
        <authorList>
            <person name="Suzuki Y."/>
            <person name="Sugano S."/>
            <person name="Totoki Y."/>
            <person name="Toyoda A."/>
            <person name="Takeda T."/>
            <person name="Sakaki Y."/>
            <person name="Tanaka A."/>
            <person name="Yokoyama S."/>
        </authorList>
    </citation>
    <scope>NUCLEOTIDE SEQUENCE [LARGE SCALE MRNA] (ISOFORM 1)</scope>
    <source>
        <tissue>Liver</tissue>
    </source>
</reference>
<reference key="4">
    <citation type="journal article" date="2003" name="Nature">
        <title>The DNA sequence of human chromosome 7.</title>
        <authorList>
            <person name="Hillier L.W."/>
            <person name="Fulton R.S."/>
            <person name="Fulton L.A."/>
            <person name="Graves T.A."/>
            <person name="Pepin K.H."/>
            <person name="Wagner-McPherson C."/>
            <person name="Layman D."/>
            <person name="Maas J."/>
            <person name="Jaeger S."/>
            <person name="Walker R."/>
            <person name="Wylie K."/>
            <person name="Sekhon M."/>
            <person name="Becker M.C."/>
            <person name="O'Laughlin M.D."/>
            <person name="Schaller M.E."/>
            <person name="Fewell G.A."/>
            <person name="Delehaunty K.D."/>
            <person name="Miner T.L."/>
            <person name="Nash W.E."/>
            <person name="Cordes M."/>
            <person name="Du H."/>
            <person name="Sun H."/>
            <person name="Edwards J."/>
            <person name="Bradshaw-Cordum H."/>
            <person name="Ali J."/>
            <person name="Andrews S."/>
            <person name="Isak A."/>
            <person name="Vanbrunt A."/>
            <person name="Nguyen C."/>
            <person name="Du F."/>
            <person name="Lamar B."/>
            <person name="Courtney L."/>
            <person name="Kalicki J."/>
            <person name="Ozersky P."/>
            <person name="Bielicki L."/>
            <person name="Scott K."/>
            <person name="Holmes A."/>
            <person name="Harkins R."/>
            <person name="Harris A."/>
            <person name="Strong C.M."/>
            <person name="Hou S."/>
            <person name="Tomlinson C."/>
            <person name="Dauphin-Kohlberg S."/>
            <person name="Kozlowicz-Reilly A."/>
            <person name="Leonard S."/>
            <person name="Rohlfing T."/>
            <person name="Rock S.M."/>
            <person name="Tin-Wollam A.-M."/>
            <person name="Abbott A."/>
            <person name="Minx P."/>
            <person name="Maupin R."/>
            <person name="Strowmatt C."/>
            <person name="Latreille P."/>
            <person name="Miller N."/>
            <person name="Johnson D."/>
            <person name="Murray J."/>
            <person name="Woessner J.P."/>
            <person name="Wendl M.C."/>
            <person name="Yang S.-P."/>
            <person name="Schultz B.R."/>
            <person name="Wallis J.W."/>
            <person name="Spieth J."/>
            <person name="Bieri T.A."/>
            <person name="Nelson J.O."/>
            <person name="Berkowicz N."/>
            <person name="Wohldmann P.E."/>
            <person name="Cook L.L."/>
            <person name="Hickenbotham M.T."/>
            <person name="Eldred J."/>
            <person name="Williams D."/>
            <person name="Bedell J.A."/>
            <person name="Mardis E.R."/>
            <person name="Clifton S.W."/>
            <person name="Chissoe S.L."/>
            <person name="Marra M.A."/>
            <person name="Raymond C."/>
            <person name="Haugen E."/>
            <person name="Gillett W."/>
            <person name="Zhou Y."/>
            <person name="James R."/>
            <person name="Phelps K."/>
            <person name="Iadanoto S."/>
            <person name="Bubb K."/>
            <person name="Simms E."/>
            <person name="Levy R."/>
            <person name="Clendenning J."/>
            <person name="Kaul R."/>
            <person name="Kent W.J."/>
            <person name="Furey T.S."/>
            <person name="Baertsch R.A."/>
            <person name="Brent M.R."/>
            <person name="Keibler E."/>
            <person name="Flicek P."/>
            <person name="Bork P."/>
            <person name="Suyama M."/>
            <person name="Bailey J.A."/>
            <person name="Portnoy M.E."/>
            <person name="Torrents D."/>
            <person name="Chinwalla A.T."/>
            <person name="Gish W.R."/>
            <person name="Eddy S.R."/>
            <person name="McPherson J.D."/>
            <person name="Olson M.V."/>
            <person name="Eichler E.E."/>
            <person name="Green E.D."/>
            <person name="Waterston R.H."/>
            <person name="Wilson R.K."/>
        </authorList>
    </citation>
    <scope>NUCLEOTIDE SEQUENCE [LARGE SCALE GENOMIC DNA]</scope>
</reference>
<reference key="5">
    <citation type="journal article" date="2004" name="Genome Res.">
        <title>The status, quality, and expansion of the NIH full-length cDNA project: the Mammalian Gene Collection (MGC).</title>
        <authorList>
            <consortium name="The MGC Project Team"/>
        </authorList>
    </citation>
    <scope>NUCLEOTIDE SEQUENCE [LARGE SCALE MRNA] (ISOFORMS 1 AND 2)</scope>
    <source>
        <tissue>Gall bladder</tissue>
        <tissue>Uterus</tissue>
    </source>
</reference>
<reference key="6">
    <citation type="journal article" date="2005" name="J. Cell Biol.">
        <title>A novel acylglycerol kinase that produces lysophosphatidic acid modulates cross talk with EGFR in prostate cancer cells.</title>
        <authorList>
            <person name="Bektas M."/>
            <person name="Payne S.G."/>
            <person name="Liu H."/>
            <person name="Goparaju S."/>
            <person name="Milstien S."/>
            <person name="Spiegel S."/>
        </authorList>
    </citation>
    <scope>FUNCTION</scope>
    <scope>CATALYTIC ACTIVITY</scope>
    <scope>COFACTOR</scope>
    <scope>SUBCELLULAR LOCATION</scope>
    <scope>TISSUE SPECIFICITY</scope>
    <scope>INDUCTION</scope>
    <scope>MUTAGENESIS OF GLY-126</scope>
</reference>
<reference key="7">
    <citation type="journal article" date="2009" name="Science">
        <title>Lysine acetylation targets protein complexes and co-regulates major cellular functions.</title>
        <authorList>
            <person name="Choudhary C."/>
            <person name="Kumar C."/>
            <person name="Gnad F."/>
            <person name="Nielsen M.L."/>
            <person name="Rehman M."/>
            <person name="Walther T.C."/>
            <person name="Olsen J.V."/>
            <person name="Mann M."/>
        </authorList>
    </citation>
    <scope>ACETYLATION [LARGE SCALE ANALYSIS] AT LYS-6</scope>
    <scope>IDENTIFICATION BY MASS SPECTROMETRY [LARGE SCALE ANALYSIS]</scope>
</reference>
<reference key="8">
    <citation type="journal article" date="2011" name="BMC Syst. Biol.">
        <title>Initial characterization of the human central proteome.</title>
        <authorList>
            <person name="Burkard T.R."/>
            <person name="Planyavsky M."/>
            <person name="Kaupe I."/>
            <person name="Breitwieser F.P."/>
            <person name="Buerckstuemmer T."/>
            <person name="Bennett K.L."/>
            <person name="Superti-Furga G."/>
            <person name="Colinge J."/>
        </authorList>
    </citation>
    <scope>IDENTIFICATION BY MASS SPECTROMETRY [LARGE SCALE ANALYSIS]</scope>
</reference>
<reference key="9">
    <citation type="journal article" date="2012" name="Am. J. Hum. Genet.">
        <title>Lack of the mitochondrial protein acylglycerol kinase causes Sengers syndrome.</title>
        <authorList>
            <person name="Mayr J.A."/>
            <person name="Haack T.B."/>
            <person name="Graf E."/>
            <person name="Zimmermann F.A."/>
            <person name="Wieland T."/>
            <person name="Haberberger B."/>
            <person name="Superti-Furga A."/>
            <person name="Kirschner J."/>
            <person name="Steinmann B."/>
            <person name="Baumgartner M.R."/>
            <person name="Moroni I."/>
            <person name="Lamantea E."/>
            <person name="Zeviani M."/>
            <person name="Rodenburg R.J."/>
            <person name="Smeitink J."/>
            <person name="Strom T.M."/>
            <person name="Meitinger T."/>
            <person name="Sperl W."/>
            <person name="Prokisch H."/>
        </authorList>
    </citation>
    <scope>INVOLVEMENT IN MTDPS10</scope>
</reference>
<reference key="10">
    <citation type="journal article" date="2012" name="Hum. Mutat.">
        <title>Identification of a truncation mutation of acylglycerol kinase (AGK) gene in a novel autosomal recessive cataract locus.</title>
        <authorList>
            <person name="Aldahmesh M.A."/>
            <person name="Khan A.O."/>
            <person name="Mohamed J.Y."/>
            <person name="Alghamdi M.H."/>
            <person name="Alkuraya F.S."/>
        </authorList>
    </citation>
    <scope>INVOLVEMENT IN CTRCT38</scope>
</reference>
<reference key="11">
    <citation type="journal article" date="2012" name="Proc. Natl. Acad. Sci. U.S.A.">
        <title>N-terminal acetylome analyses and functional insights of the N-terminal acetyltransferase NatB.</title>
        <authorList>
            <person name="Van Damme P."/>
            <person name="Lasa M."/>
            <person name="Polevoda B."/>
            <person name="Gazquez C."/>
            <person name="Elosegui-Artola A."/>
            <person name="Kim D.S."/>
            <person name="De Juan-Pardo E."/>
            <person name="Demeyer K."/>
            <person name="Hole K."/>
            <person name="Larrea E."/>
            <person name="Timmerman E."/>
            <person name="Prieto J."/>
            <person name="Arnesen T."/>
            <person name="Sherman F."/>
            <person name="Gevaert K."/>
            <person name="Aldabe R."/>
        </authorList>
    </citation>
    <scope>IDENTIFICATION BY MASS SPECTROMETRY [LARGE SCALE ANALYSIS]</scope>
</reference>
<reference key="12">
    <citation type="journal article" date="2012" name="Sci. Transl. Med.">
        <title>Molecular diagnosis of infantile mitochondrial disease with targeted next-generation sequencing.</title>
        <authorList>
            <person name="Calvo S.E."/>
            <person name="Compton A.G."/>
            <person name="Hershman S.G."/>
            <person name="Lim S.C."/>
            <person name="Lieber D.S."/>
            <person name="Tucker E.J."/>
            <person name="Laskowski A."/>
            <person name="Garone C."/>
            <person name="Liu S."/>
            <person name="Jaffe D.B."/>
            <person name="Christodoulou J."/>
            <person name="Fletcher J.M."/>
            <person name="Bruno D.L."/>
            <person name="Goldblatt J."/>
            <person name="Dimauro S."/>
            <person name="Thorburn D.R."/>
            <person name="Mootha V.K."/>
        </authorList>
    </citation>
    <scope>INVOLVEMENT IN MTDPS10</scope>
</reference>
<reference key="13">
    <citation type="journal article" date="2014" name="J. Proteomics">
        <title>An enzyme assisted RP-RPLC approach for in-depth analysis of human liver phosphoproteome.</title>
        <authorList>
            <person name="Bian Y."/>
            <person name="Song C."/>
            <person name="Cheng K."/>
            <person name="Dong M."/>
            <person name="Wang F."/>
            <person name="Huang J."/>
            <person name="Sun D."/>
            <person name="Wang L."/>
            <person name="Ye M."/>
            <person name="Zou H."/>
        </authorList>
    </citation>
    <scope>IDENTIFICATION BY MASS SPECTROMETRY [LARGE SCALE ANALYSIS]</scope>
    <source>
        <tissue>Liver</tissue>
    </source>
</reference>
<reference key="14">
    <citation type="journal article" date="2015" name="Proteomics">
        <title>N-terminome analysis of the human mitochondrial proteome.</title>
        <authorList>
            <person name="Vaca Jacome A.S."/>
            <person name="Rabilloud T."/>
            <person name="Schaeffer-Reiss C."/>
            <person name="Rompais M."/>
            <person name="Ayoub D."/>
            <person name="Lane L."/>
            <person name="Bairoch A."/>
            <person name="Van Dorsselaer A."/>
            <person name="Carapito C."/>
        </authorList>
    </citation>
    <scope>IDENTIFICATION BY MASS SPECTROMETRY [LARGE SCALE ANALYSIS]</scope>
</reference>
<reference key="15">
    <citation type="journal article" date="2017" name="Mol. Cell">
        <title>Acylglycerol kinase mutated in Sengers Syndrome is a subunit of the TIM22 protein translocase in mitochondria.</title>
        <authorList>
            <person name="Vukotic M."/>
            <person name="Nolte H."/>
            <person name="Koenig T."/>
            <person name="Saita S."/>
            <person name="Ananjew M."/>
            <person name="Krueger M."/>
            <person name="Tatsuta T."/>
            <person name="Langer T."/>
        </authorList>
    </citation>
    <scope>FUNCTION</scope>
    <scope>SUBCELLULAR LOCATION</scope>
    <scope>IDENTIFICATION IN THE TIM22 COMPLEX</scope>
    <scope>MUTAGENESIS OF GLY-126</scope>
</reference>
<reference key="16">
    <citation type="journal article" date="2017" name="Mol. Cell">
        <title>Sengers syndrome-associated mitochondrial acylglycerol kinase is a subunit of the human TIM22 protein import complex.</title>
        <authorList>
            <person name="Kang Y."/>
            <person name="Stroud D.A."/>
            <person name="Baker M.J."/>
            <person name="De Souza D.P."/>
            <person name="Frazier A.E."/>
            <person name="Liem M."/>
            <person name="Tull D."/>
            <person name="Mathivanan S."/>
            <person name="McConville M.J."/>
            <person name="Thorburn D.R."/>
            <person name="Ryan M.T."/>
            <person name="Stojanovski D."/>
        </authorList>
    </citation>
    <scope>FUNCTION</scope>
    <scope>SUBCELLULAR LOCATION</scope>
    <scope>IDENTIFICATION IN THE TIM22 COMPLEX</scope>
    <scope>INVOLVEMENT IN MTDPS10</scope>
    <scope>MUTAGENESIS OF GLY-126</scope>
</reference>
<reference key="17">
    <citation type="journal article" date="2023" name="EMBO Rep.">
        <title>LINC00493-encoded microprotein SMIM26 exerts anti-metastatic activity in renal cell carcinoma.</title>
        <authorList>
            <person name="Meng K."/>
            <person name="Lu S."/>
            <person name="Li Y.Y."/>
            <person name="Hu L.L."/>
            <person name="Zhang J."/>
            <person name="Cao Y."/>
            <person name="Wang Y."/>
            <person name="Zhang C.Z."/>
            <person name="He Q.Y."/>
        </authorList>
    </citation>
    <scope>INTERACTION WITH SMIM26</scope>
</reference>
<reference key="18">
    <citation type="journal article" date="2013" name="Mol. Genet. Metab.">
        <title>Mitochondrial citrate synthase crystals: novel finding in Sengers syndrome caused by acylglycerol kinase (AGK) mutations.</title>
        <authorList>
            <person name="Siriwardena K."/>
            <person name="Mackay N."/>
            <person name="Levandovskiy V."/>
            <person name="Blaser S."/>
            <person name="Raiman J."/>
            <person name="Kantor P.F."/>
            <person name="Ackerley C."/>
            <person name="Robinson B.H."/>
            <person name="Schulze A."/>
            <person name="Cameron J.M."/>
        </authorList>
    </citation>
    <scope>VARIANT MTDPS10 327-LYS--GLN-422 DEL</scope>
</reference>
<reference key="19">
    <citation type="journal article" date="2014" name="Orphanet J. Rare Dis.">
        <title>Sengers syndrome: six novel AGK mutations in seven new families and review of the phenotypic and mutational spectrum of 29 patients.</title>
        <authorList>
            <person name="Haghighi A."/>
            <person name="Haack T.B."/>
            <person name="Atiq M."/>
            <person name="Mottaghi H."/>
            <person name="Haghighi-Kakhki H."/>
            <person name="Bashir R.A."/>
            <person name="Ahting U."/>
            <person name="Feichtinger R.G."/>
            <person name="Mayr J.A."/>
            <person name="Roetig A."/>
            <person name="Lebre A.S."/>
            <person name="Klopstock T."/>
            <person name="Dworschak A."/>
            <person name="Pulido N."/>
            <person name="Saeed M.A."/>
            <person name="Saleh-Gohari N."/>
            <person name="Holzerova E."/>
            <person name="Chinnery P.F."/>
            <person name="Taylor R.W."/>
            <person name="Prokisch H."/>
        </authorList>
    </citation>
    <scope>VARIANTS MTDPS10 137-ARG--GLN-422 DEL AND 291-GLN--GLN-422 DEL</scope>
</reference>
<evidence type="ECO:0000250" key="1">
    <source>
        <dbReference type="UniProtKB" id="Q9ESW4"/>
    </source>
</evidence>
<evidence type="ECO:0000255" key="2">
    <source>
        <dbReference type="PROSITE-ProRule" id="PRU00783"/>
    </source>
</evidence>
<evidence type="ECO:0000256" key="3">
    <source>
        <dbReference type="SAM" id="MobiDB-lite"/>
    </source>
</evidence>
<evidence type="ECO:0000269" key="4">
    <source>
    </source>
</evidence>
<evidence type="ECO:0000269" key="5">
    <source>
    </source>
</evidence>
<evidence type="ECO:0000269" key="6">
    <source>
    </source>
</evidence>
<evidence type="ECO:0000269" key="7">
    <source>
    </source>
</evidence>
<evidence type="ECO:0000269" key="8">
    <source>
    </source>
</evidence>
<evidence type="ECO:0000269" key="9">
    <source>
    </source>
</evidence>
<evidence type="ECO:0000269" key="10">
    <source>
    </source>
</evidence>
<evidence type="ECO:0000269" key="11">
    <source>
    </source>
</evidence>
<evidence type="ECO:0000269" key="12">
    <source>
    </source>
</evidence>
<evidence type="ECO:0000269" key="13">
    <source>
    </source>
</evidence>
<evidence type="ECO:0000303" key="14">
    <source>
    </source>
</evidence>
<evidence type="ECO:0000303" key="15">
    <source>
    </source>
</evidence>
<evidence type="ECO:0000303" key="16">
    <source>
    </source>
</evidence>
<evidence type="ECO:0000305" key="17"/>
<evidence type="ECO:0000305" key="18">
    <source>
    </source>
</evidence>
<evidence type="ECO:0000312" key="19">
    <source>
        <dbReference type="HGNC" id="HGNC:21869"/>
    </source>
</evidence>
<evidence type="ECO:0007744" key="20">
    <source>
    </source>
</evidence>
<name>AGK_HUMAN</name>
<feature type="chain" id="PRO_0000252380" description="Acylglycerol kinase, mitochondrial">
    <location>
        <begin position="1"/>
        <end position="422"/>
    </location>
</feature>
<feature type="domain" description="DAGKc" evidence="2">
    <location>
        <begin position="58"/>
        <end position="199"/>
    </location>
</feature>
<feature type="region of interest" description="Hydrophobic" evidence="17">
    <location>
        <begin position="15"/>
        <end position="31"/>
    </location>
</feature>
<feature type="region of interest" description="Disordered" evidence="3">
    <location>
        <begin position="249"/>
        <end position="271"/>
    </location>
</feature>
<feature type="modified residue" description="N6-acetyllysine" evidence="20">
    <location>
        <position position="6"/>
    </location>
</feature>
<feature type="splice variant" id="VSP_020925" description="In isoform 2." evidence="14">
    <original>VFGNQLIPPNAQVKKATV</original>
    <variation>HYQDESRWEPTLSRTPGS</variation>
    <location>
        <begin position="48"/>
        <end position="65"/>
    </location>
</feature>
<feature type="splice variant" id="VSP_020926" description="In isoform 2." evidence="14">
    <location>
        <begin position="66"/>
        <end position="422"/>
    </location>
</feature>
<feature type="sequence variant" id="VAR_027848" description="In dbSNP:rs10262855.">
    <original>V</original>
    <variation>M</variation>
    <location>
        <position position="3"/>
    </location>
</feature>
<feature type="sequence variant" id="VAR_079050" description="In MTDPS10." evidence="10">
    <location>
        <begin position="137"/>
        <end position="422"/>
    </location>
</feature>
<feature type="sequence variant" id="VAR_079051" description="In MTDPS10." evidence="10">
    <location>
        <begin position="291"/>
        <end position="422"/>
    </location>
</feature>
<feature type="sequence variant" id="VAR_079052" description="In MTDPS10." evidence="9">
    <location>
        <begin position="327"/>
        <end position="422"/>
    </location>
</feature>
<feature type="mutagenesis site" description="Abolishes lipid kinase activity. Does not affect ability to associate with the TIM22 complex and mediate import of transmembrane proteins into the mitochondrial inner membrane." evidence="4 11 12">
    <original>G</original>
    <variation>E</variation>
    <location>
        <position position="126"/>
    </location>
</feature>
<feature type="sequence conflict" description="In Ref. 3; BAD96489." evidence="17" ref="3">
    <original>D</original>
    <variation>V</variation>
    <location>
        <position position="94"/>
    </location>
</feature>
<dbReference type="EC" id="2.7.1.107" evidence="4"/>
<dbReference type="EC" id="2.7.1.138" evidence="1"/>
<dbReference type="EC" id="2.7.1.94" evidence="4"/>
<dbReference type="EMBL" id="AJ278150">
    <property type="protein sequence ID" value="CAB93536.1"/>
    <property type="molecule type" value="mRNA"/>
</dbReference>
<dbReference type="EMBL" id="AK001704">
    <property type="protein sequence ID" value="BAA91848.1"/>
    <property type="molecule type" value="mRNA"/>
</dbReference>
<dbReference type="EMBL" id="AK222769">
    <property type="protein sequence ID" value="BAD96489.1"/>
    <property type="molecule type" value="mRNA"/>
</dbReference>
<dbReference type="EMBL" id="AC004918">
    <property type="status" value="NOT_ANNOTATED_CDS"/>
    <property type="molecule type" value="Genomic_DNA"/>
</dbReference>
<dbReference type="EMBL" id="AC073878">
    <property type="status" value="NOT_ANNOTATED_CDS"/>
    <property type="molecule type" value="Genomic_DNA"/>
</dbReference>
<dbReference type="EMBL" id="AC099547">
    <property type="protein sequence ID" value="AAS07537.1"/>
    <property type="molecule type" value="Genomic_DNA"/>
</dbReference>
<dbReference type="EMBL" id="BC009775">
    <property type="protein sequence ID" value="AAH09775.1"/>
    <property type="molecule type" value="mRNA"/>
</dbReference>
<dbReference type="EMBL" id="BC022777">
    <property type="protein sequence ID" value="AAH22777.1"/>
    <property type="molecule type" value="mRNA"/>
</dbReference>
<dbReference type="CCDS" id="CCDS5865.1">
    <molecule id="Q53H12-1"/>
</dbReference>
<dbReference type="RefSeq" id="NP_060708.1">
    <molecule id="Q53H12-1"/>
    <property type="nucleotide sequence ID" value="NM_018238.4"/>
</dbReference>
<dbReference type="RefSeq" id="XP_011514699.1">
    <molecule id="Q53H12-1"/>
    <property type="nucleotide sequence ID" value="XM_011516397.4"/>
</dbReference>
<dbReference type="RefSeq" id="XP_024302603.1">
    <molecule id="Q53H12-1"/>
    <property type="nucleotide sequence ID" value="XM_024446835.2"/>
</dbReference>
<dbReference type="RefSeq" id="XP_054214618.1">
    <molecule id="Q53H12-1"/>
    <property type="nucleotide sequence ID" value="XM_054358643.1"/>
</dbReference>
<dbReference type="RefSeq" id="XP_054214619.1">
    <molecule id="Q53H12-1"/>
    <property type="nucleotide sequence ID" value="XM_054358644.1"/>
</dbReference>
<dbReference type="PDB" id="7CGP">
    <property type="method" value="EM"/>
    <property type="resolution" value="3.70 A"/>
    <property type="chains" value="B=1-422"/>
</dbReference>
<dbReference type="PDBsum" id="7CGP"/>
<dbReference type="EMDB" id="EMD-9958"/>
<dbReference type="SMR" id="Q53H12"/>
<dbReference type="BioGRID" id="120868">
    <property type="interactions" value="145"/>
</dbReference>
<dbReference type="ComplexPortal" id="CPX-6124">
    <property type="entry name" value="TIM22 mitochondrial inner membrane twin-pore carrier translocase complex"/>
</dbReference>
<dbReference type="CORUM" id="Q53H12"/>
<dbReference type="FunCoup" id="Q53H12">
    <property type="interactions" value="1820"/>
</dbReference>
<dbReference type="IntAct" id="Q53H12">
    <property type="interactions" value="78"/>
</dbReference>
<dbReference type="MINT" id="Q53H12"/>
<dbReference type="STRING" id="9606.ENSP00000497280"/>
<dbReference type="ChEMBL" id="CHEMBL2417354"/>
<dbReference type="SwissLipids" id="SLP:000000638"/>
<dbReference type="iPTMnet" id="Q53H12"/>
<dbReference type="PhosphoSitePlus" id="Q53H12"/>
<dbReference type="SwissPalm" id="Q53H12"/>
<dbReference type="BioMuta" id="AGK"/>
<dbReference type="DMDM" id="116248550"/>
<dbReference type="jPOST" id="Q53H12"/>
<dbReference type="MassIVE" id="Q53H12"/>
<dbReference type="PaxDb" id="9606-ENSP00000347581"/>
<dbReference type="PeptideAtlas" id="Q53H12"/>
<dbReference type="ProteomicsDB" id="62491">
    <molecule id="Q53H12-1"/>
</dbReference>
<dbReference type="ProteomicsDB" id="62492">
    <molecule id="Q53H12-2"/>
</dbReference>
<dbReference type="Pumba" id="Q53H12"/>
<dbReference type="Antibodypedia" id="18305">
    <property type="antibodies" value="195 antibodies from 31 providers"/>
</dbReference>
<dbReference type="DNASU" id="55750"/>
<dbReference type="Ensembl" id="ENST00000492693.5">
    <molecule id="Q53H12-2"/>
    <property type="protein sequence ID" value="ENSP00000418789.1"/>
    <property type="gene ID" value="ENSG00000006530.18"/>
</dbReference>
<dbReference type="Ensembl" id="ENST00000575872.2">
    <property type="protein sequence ID" value="ENSP00000458417.2"/>
    <property type="gene ID" value="ENSG00000262327.7"/>
</dbReference>
<dbReference type="Ensembl" id="ENST00000648068.1">
    <molecule id="Q53H12-1"/>
    <property type="protein sequence ID" value="ENSP00000498112.1"/>
    <property type="gene ID" value="ENSG00000006530.18"/>
</dbReference>
<dbReference type="Ensembl" id="ENST00000649286.2">
    <molecule id="Q53H12-1"/>
    <property type="protein sequence ID" value="ENSP00000497280.1"/>
    <property type="gene ID" value="ENSG00000006530.18"/>
</dbReference>
<dbReference type="Ensembl" id="ENST00000650547.1">
    <molecule id="Q53H12-1"/>
    <property type="protein sequence ID" value="ENSP00000496789.1"/>
    <property type="gene ID" value="ENSG00000006530.18"/>
</dbReference>
<dbReference type="GeneID" id="55750"/>
<dbReference type="KEGG" id="hsa:55750"/>
<dbReference type="MANE-Select" id="ENST00000649286.2">
    <property type="protein sequence ID" value="ENSP00000497280.1"/>
    <property type="RefSeq nucleotide sequence ID" value="NM_018238.4"/>
    <property type="RefSeq protein sequence ID" value="NP_060708.1"/>
</dbReference>
<dbReference type="UCSC" id="uc003vwi.3">
    <molecule id="Q53H12-1"/>
    <property type="organism name" value="human"/>
</dbReference>
<dbReference type="AGR" id="HGNC:21869"/>
<dbReference type="CTD" id="55750"/>
<dbReference type="DisGeNET" id="55750"/>
<dbReference type="GeneCards" id="AGK"/>
<dbReference type="HGNC" id="HGNC:21869">
    <property type="gene designation" value="AGK"/>
</dbReference>
<dbReference type="HPA" id="ENSG00000006530">
    <property type="expression patterns" value="Low tissue specificity"/>
</dbReference>
<dbReference type="MalaCards" id="AGK"/>
<dbReference type="MIM" id="212350">
    <property type="type" value="phenotype"/>
</dbReference>
<dbReference type="MIM" id="610345">
    <property type="type" value="gene"/>
</dbReference>
<dbReference type="MIM" id="614691">
    <property type="type" value="phenotype"/>
</dbReference>
<dbReference type="neXtProt" id="NX_Q53H12"/>
<dbReference type="OpenTargets" id="ENSG00000006530"/>
<dbReference type="Orphanet" id="1369">
    <property type="disease" value="Congenital cataract-hypertrophic cardiomyopathy-mitochondrial myopathy syndrome"/>
</dbReference>
<dbReference type="Orphanet" id="98994">
    <property type="disease" value="Total early-onset cataract"/>
</dbReference>
<dbReference type="PharmGKB" id="PA162375851"/>
<dbReference type="VEuPathDB" id="HostDB:ENSG00000006530"/>
<dbReference type="eggNOG" id="KOG4435">
    <property type="taxonomic scope" value="Eukaryota"/>
</dbReference>
<dbReference type="GeneTree" id="ENSGT00940000154961"/>
<dbReference type="HOGENOM" id="CLU_042458_0_0_1"/>
<dbReference type="InParanoid" id="Q53H12"/>
<dbReference type="OMA" id="HWKKTTF"/>
<dbReference type="OrthoDB" id="9979394at2759"/>
<dbReference type="PAN-GO" id="Q53H12">
    <property type="GO annotations" value="8 GO annotations based on evolutionary models"/>
</dbReference>
<dbReference type="PhylomeDB" id="Q53H12"/>
<dbReference type="TreeFam" id="TF320485"/>
<dbReference type="BRENDA" id="2.7.1.94">
    <property type="organism ID" value="2681"/>
</dbReference>
<dbReference type="PathwayCommons" id="Q53H12"/>
<dbReference type="Reactome" id="R-HSA-1483206">
    <property type="pathway name" value="Glycerophospholipid biosynthesis"/>
</dbReference>
<dbReference type="Reactome" id="R-HSA-6802952">
    <property type="pathway name" value="Signaling by BRAF and RAF1 fusions"/>
</dbReference>
<dbReference type="SABIO-RK" id="Q53H12"/>
<dbReference type="SignaLink" id="Q53H12"/>
<dbReference type="SIGNOR" id="Q53H12"/>
<dbReference type="UniPathway" id="UPA00230"/>
<dbReference type="BioGRID-ORCS" id="55750">
    <property type="hits" value="26 hits in 1168 CRISPR screens"/>
</dbReference>
<dbReference type="CD-CODE" id="FB4E32DD">
    <property type="entry name" value="Presynaptic clusters and postsynaptic densities"/>
</dbReference>
<dbReference type="ChiTaRS" id="AGK">
    <property type="organism name" value="human"/>
</dbReference>
<dbReference type="GeneWiki" id="AGK_(gene)"/>
<dbReference type="GenomeRNAi" id="55750"/>
<dbReference type="Pharos" id="Q53H12">
    <property type="development level" value="Tbio"/>
</dbReference>
<dbReference type="PRO" id="PR:Q53H12"/>
<dbReference type="Proteomes" id="UP000005640">
    <property type="component" value="Chromosome 7"/>
</dbReference>
<dbReference type="RNAct" id="Q53H12">
    <property type="molecule type" value="protein"/>
</dbReference>
<dbReference type="Bgee" id="ENSG00000006530">
    <property type="expression patterns" value="Expressed in adrenal tissue and 94 other cell types or tissues"/>
</dbReference>
<dbReference type="ExpressionAtlas" id="Q53H12">
    <property type="expression patterns" value="baseline and differential"/>
</dbReference>
<dbReference type="GO" id="GO:0005737">
    <property type="term" value="C:cytoplasm"/>
    <property type="evidence" value="ECO:0000318"/>
    <property type="project" value="GO_Central"/>
</dbReference>
<dbReference type="GO" id="GO:0005829">
    <property type="term" value="C:cytosol"/>
    <property type="evidence" value="ECO:0000304"/>
    <property type="project" value="Reactome"/>
</dbReference>
<dbReference type="GO" id="GO:0043231">
    <property type="term" value="C:intracellular membrane-bounded organelle"/>
    <property type="evidence" value="ECO:0000314"/>
    <property type="project" value="HPA"/>
</dbReference>
<dbReference type="GO" id="GO:0016020">
    <property type="term" value="C:membrane"/>
    <property type="evidence" value="ECO:0000318"/>
    <property type="project" value="GO_Central"/>
</dbReference>
<dbReference type="GO" id="GO:0005743">
    <property type="term" value="C:mitochondrial inner membrane"/>
    <property type="evidence" value="ECO:0000314"/>
    <property type="project" value="UniProtKB"/>
</dbReference>
<dbReference type="GO" id="GO:0005758">
    <property type="term" value="C:mitochondrial intermembrane space"/>
    <property type="evidence" value="ECO:0000314"/>
    <property type="project" value="UniProtKB"/>
</dbReference>
<dbReference type="GO" id="GO:0031966">
    <property type="term" value="C:mitochondrial membrane"/>
    <property type="evidence" value="ECO:0000314"/>
    <property type="project" value="UniProtKB"/>
</dbReference>
<dbReference type="GO" id="GO:0005741">
    <property type="term" value="C:mitochondrial outer membrane"/>
    <property type="evidence" value="ECO:0000304"/>
    <property type="project" value="Reactome"/>
</dbReference>
<dbReference type="GO" id="GO:0005739">
    <property type="term" value="C:mitochondrion"/>
    <property type="evidence" value="ECO:0000314"/>
    <property type="project" value="HPA"/>
</dbReference>
<dbReference type="GO" id="GO:0042721">
    <property type="term" value="C:TIM22 mitochondrial import inner membrane insertion complex"/>
    <property type="evidence" value="ECO:0000314"/>
    <property type="project" value="UniProtKB"/>
</dbReference>
<dbReference type="GO" id="GO:0047620">
    <property type="term" value="F:acylglycerol kinase activity"/>
    <property type="evidence" value="ECO:0000314"/>
    <property type="project" value="UniProtKB"/>
</dbReference>
<dbReference type="GO" id="GO:0005524">
    <property type="term" value="F:ATP binding"/>
    <property type="evidence" value="ECO:0007669"/>
    <property type="project" value="UniProtKB-KW"/>
</dbReference>
<dbReference type="GO" id="GO:0004143">
    <property type="term" value="F:ATP-dependent diacylglycerol kinase activity"/>
    <property type="evidence" value="ECO:0000314"/>
    <property type="project" value="UniProtKB"/>
</dbReference>
<dbReference type="GO" id="GO:0001729">
    <property type="term" value="F:ceramide kinase activity"/>
    <property type="evidence" value="ECO:0000318"/>
    <property type="project" value="GO_Central"/>
</dbReference>
<dbReference type="GO" id="GO:0017050">
    <property type="term" value="F:D-erythro-sphingosine kinase activity"/>
    <property type="evidence" value="ECO:0000318"/>
    <property type="project" value="GO_Central"/>
</dbReference>
<dbReference type="GO" id="GO:0046513">
    <property type="term" value="P:ceramide biosynthetic process"/>
    <property type="evidence" value="ECO:0000318"/>
    <property type="project" value="GO_Central"/>
</dbReference>
<dbReference type="GO" id="GO:0046486">
    <property type="term" value="P:glycerolipid metabolic process"/>
    <property type="evidence" value="ECO:0007669"/>
    <property type="project" value="UniProtKB-UniPathway"/>
</dbReference>
<dbReference type="GO" id="GO:0046834">
    <property type="term" value="P:lipid phosphorylation"/>
    <property type="evidence" value="ECO:0007669"/>
    <property type="project" value="Ensembl"/>
</dbReference>
<dbReference type="GO" id="GO:0045039">
    <property type="term" value="P:protein insertion into mitochondrial inner membrane"/>
    <property type="evidence" value="ECO:0000314"/>
    <property type="project" value="UniProtKB"/>
</dbReference>
<dbReference type="GO" id="GO:0046512">
    <property type="term" value="P:sphingosine biosynthetic process"/>
    <property type="evidence" value="ECO:0000318"/>
    <property type="project" value="GO_Central"/>
</dbReference>
<dbReference type="FunFam" id="3.40.50.10330:FF:000015">
    <property type="entry name" value="acylglycerol kinase, mitochondrial"/>
    <property type="match status" value="1"/>
</dbReference>
<dbReference type="Gene3D" id="3.40.50.10330">
    <property type="entry name" value="Probable inorganic polyphosphate/atp-NAD kinase, domain 1"/>
    <property type="match status" value="1"/>
</dbReference>
<dbReference type="InterPro" id="IPR045579">
    <property type="entry name" value="AGK_C"/>
</dbReference>
<dbReference type="InterPro" id="IPR017438">
    <property type="entry name" value="ATP-NAD_kinase_N"/>
</dbReference>
<dbReference type="InterPro" id="IPR001206">
    <property type="entry name" value="Diacylglycerol_kinase_cat_dom"/>
</dbReference>
<dbReference type="InterPro" id="IPR050187">
    <property type="entry name" value="Lipid_Phosphate_FormReg"/>
</dbReference>
<dbReference type="InterPro" id="IPR016064">
    <property type="entry name" value="NAD/diacylglycerol_kinase_sf"/>
</dbReference>
<dbReference type="PANTHER" id="PTHR12358:SF31">
    <property type="entry name" value="ACYLGLYCEROL KINASE, MITOCHONDRIAL"/>
    <property type="match status" value="1"/>
</dbReference>
<dbReference type="PANTHER" id="PTHR12358">
    <property type="entry name" value="SPHINGOSINE KINASE"/>
    <property type="match status" value="1"/>
</dbReference>
<dbReference type="Pfam" id="PF19712">
    <property type="entry name" value="AGK_C"/>
    <property type="match status" value="1"/>
</dbReference>
<dbReference type="Pfam" id="PF00781">
    <property type="entry name" value="DAGK_cat"/>
    <property type="match status" value="1"/>
</dbReference>
<dbReference type="SMART" id="SM00046">
    <property type="entry name" value="DAGKc"/>
    <property type="match status" value="1"/>
</dbReference>
<dbReference type="SUPFAM" id="SSF111331">
    <property type="entry name" value="NAD kinase/diacylglycerol kinase-like"/>
    <property type="match status" value="1"/>
</dbReference>
<dbReference type="PROSITE" id="PS50146">
    <property type="entry name" value="DAGK"/>
    <property type="match status" value="1"/>
</dbReference>
<protein>
    <recommendedName>
        <fullName evidence="15">Acylglycerol kinase, mitochondrial</fullName>
        <shortName evidence="15">hAGK</shortName>
        <ecNumber evidence="4">2.7.1.107</ecNumber>
        <ecNumber evidence="1">2.7.1.138</ecNumber>
        <ecNumber evidence="4">2.7.1.94</ecNumber>
    </recommendedName>
    <alternativeName>
        <fullName evidence="16">Multiple substrate lipid kinase</fullName>
        <shortName evidence="16">HsMuLK</shortName>
        <shortName evidence="16">MuLK</shortName>
        <shortName evidence="16">Multi-substrate lipid kinase</shortName>
    </alternativeName>
</protein>
<accession>Q53H12</accession>
<accession>Q75KN1</accession>
<accession>Q96GC3</accession>
<accession>Q9NP48</accession>
<organism>
    <name type="scientific">Homo sapiens</name>
    <name type="common">Human</name>
    <dbReference type="NCBI Taxonomy" id="9606"/>
    <lineage>
        <taxon>Eukaryota</taxon>
        <taxon>Metazoa</taxon>
        <taxon>Chordata</taxon>
        <taxon>Craniata</taxon>
        <taxon>Vertebrata</taxon>
        <taxon>Euteleostomi</taxon>
        <taxon>Mammalia</taxon>
        <taxon>Eutheria</taxon>
        <taxon>Euarchontoglires</taxon>
        <taxon>Primates</taxon>
        <taxon>Haplorrhini</taxon>
        <taxon>Catarrhini</taxon>
        <taxon>Hominidae</taxon>
        <taxon>Homo</taxon>
    </lineage>
</organism>